<organism>
    <name type="scientific">Listeria monocytogenes serotype 4b (strain F2365)</name>
    <dbReference type="NCBI Taxonomy" id="265669"/>
    <lineage>
        <taxon>Bacteria</taxon>
        <taxon>Bacillati</taxon>
        <taxon>Bacillota</taxon>
        <taxon>Bacilli</taxon>
        <taxon>Bacillales</taxon>
        <taxon>Listeriaceae</taxon>
        <taxon>Listeria</taxon>
    </lineage>
</organism>
<keyword id="KW-0963">Cytoplasm</keyword>
<keyword id="KW-0312">Gluconeogenesis</keyword>
<keyword id="KW-0324">Glycolysis</keyword>
<keyword id="KW-0413">Isomerase</keyword>
<sequence length="254" mass="28083">MRKPLVGINMKNYINTRAQTSEWLEATIPLLKNFSDVDTFIFPSMGTLETTANLLAGTSFGFGPQNMAPEKSGPLTGEFSVESIIDLNANYVEIGHAERKNLFHEKTSEIAKKIKLALDEKITPVVCVGEEVRANDTNELKNALKKQIEALFQTINLAQWENVVLAYEPEWAIGKASSAETNYIESAHQALREIIRELGGDETLVRIIYGGSVSKENAAEIVRQKNVDGLFVGRFGHKPQNFADIVSIVSKTKG</sequence>
<feature type="chain" id="PRO_0000090241" description="Probable triosephosphate isomerase 2">
    <location>
        <begin position="1"/>
        <end position="254"/>
    </location>
</feature>
<feature type="active site" description="Electrophile" evidence="1">
    <location>
        <position position="96"/>
    </location>
</feature>
<feature type="active site" description="Proton acceptor" evidence="1">
    <location>
        <position position="168"/>
    </location>
</feature>
<feature type="binding site" evidence="1">
    <location>
        <begin position="9"/>
        <end position="11"/>
    </location>
    <ligand>
        <name>substrate</name>
    </ligand>
</feature>
<feature type="binding site" evidence="1">
    <location>
        <position position="174"/>
    </location>
    <ligand>
        <name>substrate</name>
    </ligand>
</feature>
<feature type="binding site" evidence="1">
    <location>
        <position position="212"/>
    </location>
    <ligand>
        <name>substrate</name>
    </ligand>
</feature>
<accession>Q723V9</accession>
<name>TPIS2_LISMF</name>
<comment type="function">
    <text evidence="1">Involved in the gluconeogenesis. Catalyzes stereospecifically the conversion of dihydroxyacetone phosphate (DHAP) to D-glyceraldehyde-3-phosphate (G3P).</text>
</comment>
<comment type="catalytic activity">
    <reaction evidence="1">
        <text>D-glyceraldehyde 3-phosphate = dihydroxyacetone phosphate</text>
        <dbReference type="Rhea" id="RHEA:18585"/>
        <dbReference type="ChEBI" id="CHEBI:57642"/>
        <dbReference type="ChEBI" id="CHEBI:59776"/>
        <dbReference type="EC" id="5.3.1.1"/>
    </reaction>
</comment>
<comment type="pathway">
    <text evidence="1">Carbohydrate biosynthesis; gluconeogenesis.</text>
</comment>
<comment type="pathway">
    <text evidence="1">Carbohydrate degradation; glycolysis; D-glyceraldehyde 3-phosphate from glycerone phosphate: step 1/1.</text>
</comment>
<comment type="subunit">
    <text evidence="1">Homodimer.</text>
</comment>
<comment type="subcellular location">
    <subcellularLocation>
        <location evidence="1">Cytoplasm</location>
    </subcellularLocation>
</comment>
<comment type="similarity">
    <text evidence="2">Belongs to the triosephosphate isomerase family.</text>
</comment>
<evidence type="ECO:0000250" key="1">
    <source>
        <dbReference type="UniProtKB" id="P9WG43"/>
    </source>
</evidence>
<evidence type="ECO:0000305" key="2"/>
<protein>
    <recommendedName>
        <fullName evidence="1">Probable triosephosphate isomerase 2</fullName>
        <shortName evidence="1">TIM 2</shortName>
        <shortName evidence="1">TPI 2</shortName>
        <ecNumber evidence="1">5.3.1.1</ecNumber>
    </recommendedName>
    <alternativeName>
        <fullName evidence="1">Triose-phosphate isomerase 2</fullName>
    </alternativeName>
</protein>
<dbReference type="EC" id="5.3.1.1" evidence="1"/>
<dbReference type="EMBL" id="AE017262">
    <property type="protein sequence ID" value="AAT03152.1"/>
    <property type="molecule type" value="Genomic_DNA"/>
</dbReference>
<dbReference type="RefSeq" id="WP_003724277.1">
    <property type="nucleotide sequence ID" value="NC_002973.6"/>
</dbReference>
<dbReference type="SMR" id="Q723V9"/>
<dbReference type="KEGG" id="lmf:LMOf2365_0366"/>
<dbReference type="HOGENOM" id="CLU_024251_2_3_9"/>
<dbReference type="UniPathway" id="UPA00109">
    <property type="reaction ID" value="UER00189"/>
</dbReference>
<dbReference type="UniPathway" id="UPA00138"/>
<dbReference type="GO" id="GO:0005829">
    <property type="term" value="C:cytosol"/>
    <property type="evidence" value="ECO:0007669"/>
    <property type="project" value="TreeGrafter"/>
</dbReference>
<dbReference type="GO" id="GO:0004807">
    <property type="term" value="F:triose-phosphate isomerase activity"/>
    <property type="evidence" value="ECO:0007669"/>
    <property type="project" value="UniProtKB-EC"/>
</dbReference>
<dbReference type="GO" id="GO:0006094">
    <property type="term" value="P:gluconeogenesis"/>
    <property type="evidence" value="ECO:0007669"/>
    <property type="project" value="UniProtKB-UniPathway"/>
</dbReference>
<dbReference type="GO" id="GO:0046166">
    <property type="term" value="P:glyceraldehyde-3-phosphate biosynthetic process"/>
    <property type="evidence" value="ECO:0007669"/>
    <property type="project" value="TreeGrafter"/>
</dbReference>
<dbReference type="GO" id="GO:0019563">
    <property type="term" value="P:glycerol catabolic process"/>
    <property type="evidence" value="ECO:0007669"/>
    <property type="project" value="TreeGrafter"/>
</dbReference>
<dbReference type="GO" id="GO:0006096">
    <property type="term" value="P:glycolytic process"/>
    <property type="evidence" value="ECO:0007669"/>
    <property type="project" value="UniProtKB-UniPathway"/>
</dbReference>
<dbReference type="CDD" id="cd00311">
    <property type="entry name" value="TIM"/>
    <property type="match status" value="1"/>
</dbReference>
<dbReference type="FunFam" id="3.20.20.70:FF:000328">
    <property type="entry name" value="Triosephosphate isomerase 2"/>
    <property type="match status" value="1"/>
</dbReference>
<dbReference type="Gene3D" id="3.20.20.70">
    <property type="entry name" value="Aldolase class I"/>
    <property type="match status" value="1"/>
</dbReference>
<dbReference type="InterPro" id="IPR013785">
    <property type="entry name" value="Aldolase_TIM"/>
</dbReference>
<dbReference type="InterPro" id="IPR035990">
    <property type="entry name" value="TIM_sf"/>
</dbReference>
<dbReference type="InterPro" id="IPR000652">
    <property type="entry name" value="Triosephosphate_isomerase"/>
</dbReference>
<dbReference type="InterPro" id="IPR020861">
    <property type="entry name" value="Triosephosphate_isomerase_AS"/>
</dbReference>
<dbReference type="PANTHER" id="PTHR21139">
    <property type="entry name" value="TRIOSEPHOSPHATE ISOMERASE"/>
    <property type="match status" value="1"/>
</dbReference>
<dbReference type="PANTHER" id="PTHR21139:SF42">
    <property type="entry name" value="TRIOSEPHOSPHATE ISOMERASE"/>
    <property type="match status" value="1"/>
</dbReference>
<dbReference type="Pfam" id="PF00121">
    <property type="entry name" value="TIM"/>
    <property type="match status" value="1"/>
</dbReference>
<dbReference type="SUPFAM" id="SSF51351">
    <property type="entry name" value="Triosephosphate isomerase (TIM)"/>
    <property type="match status" value="1"/>
</dbReference>
<dbReference type="PROSITE" id="PS00171">
    <property type="entry name" value="TIM_1"/>
    <property type="match status" value="1"/>
</dbReference>
<dbReference type="PROSITE" id="PS51440">
    <property type="entry name" value="TIM_2"/>
    <property type="match status" value="1"/>
</dbReference>
<proteinExistence type="inferred from homology"/>
<reference key="1">
    <citation type="journal article" date="2004" name="Nucleic Acids Res.">
        <title>Whole genome comparisons of serotype 4b and 1/2a strains of the food-borne pathogen Listeria monocytogenes reveal new insights into the core genome components of this species.</title>
        <authorList>
            <person name="Nelson K.E."/>
            <person name="Fouts D.E."/>
            <person name="Mongodin E.F."/>
            <person name="Ravel J."/>
            <person name="DeBoy R.T."/>
            <person name="Kolonay J.F."/>
            <person name="Rasko D.A."/>
            <person name="Angiuoli S.V."/>
            <person name="Gill S.R."/>
            <person name="Paulsen I.T."/>
            <person name="Peterson J.D."/>
            <person name="White O."/>
            <person name="Nelson W.C."/>
            <person name="Nierman W.C."/>
            <person name="Beanan M.J."/>
            <person name="Brinkac L.M."/>
            <person name="Daugherty S.C."/>
            <person name="Dodson R.J."/>
            <person name="Durkin A.S."/>
            <person name="Madupu R."/>
            <person name="Haft D.H."/>
            <person name="Selengut J."/>
            <person name="Van Aken S.E."/>
            <person name="Khouri H.M."/>
            <person name="Fedorova N."/>
            <person name="Forberger H.A."/>
            <person name="Tran B."/>
            <person name="Kathariou S."/>
            <person name="Wonderling L.D."/>
            <person name="Uhlich G.A."/>
            <person name="Bayles D.O."/>
            <person name="Luchansky J.B."/>
            <person name="Fraser C.M."/>
        </authorList>
    </citation>
    <scope>NUCLEOTIDE SEQUENCE [LARGE SCALE GENOMIC DNA]</scope>
    <source>
        <strain>F2365</strain>
    </source>
</reference>
<gene>
    <name evidence="1" type="primary">tpiA2</name>
    <name type="ordered locus">LMOf2365_0366</name>
</gene>